<proteinExistence type="inferred from homology"/>
<sequence>MSALNKLFGDERKRDLESNVAALFSQSSGPVDTLEVKSKPRTLLPVVSKRQETETAKPAEPTEIVEADLPRKRAKKAKKTNEDDDHLEEKYMQQVLKEDSDHESEAEAPTEPVVELKPSKRASRPDMKEEELAKAERTVFVGNVPHEAITDKKVYKEFKQLVAQRKLSKEDEDDEEQKAEKYAVESIRFRSIAFEEALPRKVAFVQQKLHHTRDSVNAYVVYAEKEAVTAACKLNGSVFHDHHLRFDSVAHPAPHDRKRSVFVGNLDFEESEESLWKHFMSCGPIEYVRIVRDPKTNVGKGFAYVQFADLVSVNKALLLNDKKMAVGKGRKLRVTRCRNMQKVQRQSNTAALPKLTDQQKTKLGRARKVLGKADRATLGKLTIEGTRATKGANTPNLRVKKARSKTGRVTKRSQAFKKAEANKKQK</sequence>
<gene>
    <name type="primary">NOP12</name>
    <name type="ordered locus">ACR274W</name>
</gene>
<reference key="1">
    <citation type="journal article" date="2004" name="Science">
        <title>The Ashbya gossypii genome as a tool for mapping the ancient Saccharomyces cerevisiae genome.</title>
        <authorList>
            <person name="Dietrich F.S."/>
            <person name="Voegeli S."/>
            <person name="Brachat S."/>
            <person name="Lerch A."/>
            <person name="Gates K."/>
            <person name="Steiner S."/>
            <person name="Mohr C."/>
            <person name="Poehlmann R."/>
            <person name="Luedi P."/>
            <person name="Choi S."/>
            <person name="Wing R.A."/>
            <person name="Flavier A."/>
            <person name="Gaffney T.D."/>
            <person name="Philippsen P."/>
        </authorList>
    </citation>
    <scope>NUCLEOTIDE SEQUENCE [LARGE SCALE GENOMIC DNA]</scope>
    <source>
        <strain>ATCC 10895 / CBS 109.51 / FGSC 9923 / NRRL Y-1056</strain>
    </source>
</reference>
<reference key="2">
    <citation type="journal article" date="2013" name="G3 (Bethesda)">
        <title>Genomes of Ashbya fungi isolated from insects reveal four mating-type loci, numerous translocations, lack of transposons, and distinct gene duplications.</title>
        <authorList>
            <person name="Dietrich F.S."/>
            <person name="Voegeli S."/>
            <person name="Kuo S."/>
            <person name="Philippsen P."/>
        </authorList>
    </citation>
    <scope>GENOME REANNOTATION</scope>
    <source>
        <strain>ATCC 10895 / CBS 109.51 / FGSC 9923 / NRRL Y-1056</strain>
    </source>
</reference>
<feature type="chain" id="PRO_0000081664" description="Nucleolar protein 12">
    <location>
        <begin position="1"/>
        <end position="426"/>
    </location>
</feature>
<feature type="domain" description="RRM 1" evidence="2">
    <location>
        <begin position="137"/>
        <end position="251"/>
    </location>
</feature>
<feature type="domain" description="RRM 2" evidence="2">
    <location>
        <begin position="259"/>
        <end position="339"/>
    </location>
</feature>
<feature type="region of interest" description="Disordered" evidence="3">
    <location>
        <begin position="26"/>
        <end position="128"/>
    </location>
</feature>
<feature type="region of interest" description="Disordered" evidence="3">
    <location>
        <begin position="401"/>
        <end position="426"/>
    </location>
</feature>
<feature type="compositionally biased region" description="Basic and acidic residues" evidence="3">
    <location>
        <begin position="87"/>
        <end position="105"/>
    </location>
</feature>
<feature type="compositionally biased region" description="Basic residues" evidence="3">
    <location>
        <begin position="401"/>
        <end position="415"/>
    </location>
</feature>
<feature type="compositionally biased region" description="Basic and acidic residues" evidence="3">
    <location>
        <begin position="417"/>
        <end position="426"/>
    </location>
</feature>
<organism>
    <name type="scientific">Eremothecium gossypii (strain ATCC 10895 / CBS 109.51 / FGSC 9923 / NRRL Y-1056)</name>
    <name type="common">Yeast</name>
    <name type="synonym">Ashbya gossypii</name>
    <dbReference type="NCBI Taxonomy" id="284811"/>
    <lineage>
        <taxon>Eukaryota</taxon>
        <taxon>Fungi</taxon>
        <taxon>Dikarya</taxon>
        <taxon>Ascomycota</taxon>
        <taxon>Saccharomycotina</taxon>
        <taxon>Saccharomycetes</taxon>
        <taxon>Saccharomycetales</taxon>
        <taxon>Saccharomycetaceae</taxon>
        <taxon>Eremothecium</taxon>
    </lineage>
</organism>
<accession>Q75BJ7</accession>
<comment type="function">
    <text evidence="1">Involved in pre-25S rRNA processing.</text>
</comment>
<comment type="subcellular location">
    <subcellularLocation>
        <location evidence="1">Nucleus</location>
        <location evidence="1">Nucleolus</location>
    </subcellularLocation>
</comment>
<comment type="similarity">
    <text evidence="4">Belongs to the RRM RBM34 family.</text>
</comment>
<dbReference type="EMBL" id="AE016816">
    <property type="protein sequence ID" value="AAS51500.1"/>
    <property type="molecule type" value="Genomic_DNA"/>
</dbReference>
<dbReference type="RefSeq" id="NP_983676.1">
    <property type="nucleotide sequence ID" value="NM_209029.1"/>
</dbReference>
<dbReference type="SMR" id="Q75BJ7"/>
<dbReference type="FunCoup" id="Q75BJ7">
    <property type="interactions" value="913"/>
</dbReference>
<dbReference type="STRING" id="284811.Q75BJ7"/>
<dbReference type="EnsemblFungi" id="AAS51500">
    <property type="protein sequence ID" value="AAS51500"/>
    <property type="gene ID" value="AGOS_ACR274W"/>
</dbReference>
<dbReference type="GeneID" id="4619811"/>
<dbReference type="KEGG" id="ago:AGOS_ACR274W"/>
<dbReference type="eggNOG" id="KOG0118">
    <property type="taxonomic scope" value="Eukaryota"/>
</dbReference>
<dbReference type="HOGENOM" id="CLU_006468_0_0_1"/>
<dbReference type="InParanoid" id="Q75BJ7"/>
<dbReference type="OMA" id="KCTDEQM"/>
<dbReference type="OrthoDB" id="442677at2759"/>
<dbReference type="Proteomes" id="UP000000591">
    <property type="component" value="Chromosome III"/>
</dbReference>
<dbReference type="GO" id="GO:0005730">
    <property type="term" value="C:nucleolus"/>
    <property type="evidence" value="ECO:0000318"/>
    <property type="project" value="GO_Central"/>
</dbReference>
<dbReference type="GO" id="GO:0030684">
    <property type="term" value="C:preribosome"/>
    <property type="evidence" value="ECO:0007669"/>
    <property type="project" value="EnsemblFungi"/>
</dbReference>
<dbReference type="GO" id="GO:0003723">
    <property type="term" value="F:RNA binding"/>
    <property type="evidence" value="ECO:0000318"/>
    <property type="project" value="GO_Central"/>
</dbReference>
<dbReference type="GO" id="GO:0019843">
    <property type="term" value="F:rRNA binding"/>
    <property type="evidence" value="ECO:0007669"/>
    <property type="project" value="EnsemblFungi"/>
</dbReference>
<dbReference type="GO" id="GO:0000463">
    <property type="term" value="P:maturation of LSU-rRNA from tricistronic rRNA transcript (SSU-rRNA, 5.8S rRNA, LSU-rRNA)"/>
    <property type="evidence" value="ECO:0000318"/>
    <property type="project" value="GO_Central"/>
</dbReference>
<dbReference type="CDD" id="cd12670">
    <property type="entry name" value="RRM2_Nop12p_like"/>
    <property type="match status" value="1"/>
</dbReference>
<dbReference type="Gene3D" id="3.30.70.330">
    <property type="match status" value="2"/>
</dbReference>
<dbReference type="InterPro" id="IPR012677">
    <property type="entry name" value="Nucleotide-bd_a/b_plait_sf"/>
</dbReference>
<dbReference type="InterPro" id="IPR035979">
    <property type="entry name" value="RBD_domain_sf"/>
</dbReference>
<dbReference type="InterPro" id="IPR047189">
    <property type="entry name" value="RRM2_Nop12p-like"/>
</dbReference>
<dbReference type="InterPro" id="IPR000504">
    <property type="entry name" value="RRM_dom"/>
</dbReference>
<dbReference type="PANTHER" id="PTHR23236">
    <property type="entry name" value="EUKARYOTIC TRANSLATION INITIATION FACTOR 4B/4H"/>
    <property type="match status" value="1"/>
</dbReference>
<dbReference type="PANTHER" id="PTHR23236:SF25">
    <property type="entry name" value="RNA-BINDING PROTEIN 34"/>
    <property type="match status" value="1"/>
</dbReference>
<dbReference type="Pfam" id="PF00076">
    <property type="entry name" value="RRM_1"/>
    <property type="match status" value="1"/>
</dbReference>
<dbReference type="SMART" id="SM00360">
    <property type="entry name" value="RRM"/>
    <property type="match status" value="2"/>
</dbReference>
<dbReference type="SUPFAM" id="SSF54928">
    <property type="entry name" value="RNA-binding domain, RBD"/>
    <property type="match status" value="2"/>
</dbReference>
<dbReference type="PROSITE" id="PS50102">
    <property type="entry name" value="RRM"/>
    <property type="match status" value="1"/>
</dbReference>
<name>NOP12_EREGS</name>
<keyword id="KW-0539">Nucleus</keyword>
<keyword id="KW-1185">Reference proteome</keyword>
<keyword id="KW-0677">Repeat</keyword>
<keyword id="KW-0690">Ribosome biogenesis</keyword>
<keyword id="KW-0694">RNA-binding</keyword>
<keyword id="KW-0698">rRNA processing</keyword>
<evidence type="ECO:0000250" key="1"/>
<evidence type="ECO:0000255" key="2">
    <source>
        <dbReference type="PROSITE-ProRule" id="PRU00176"/>
    </source>
</evidence>
<evidence type="ECO:0000256" key="3">
    <source>
        <dbReference type="SAM" id="MobiDB-lite"/>
    </source>
</evidence>
<evidence type="ECO:0000305" key="4"/>
<protein>
    <recommendedName>
        <fullName>Nucleolar protein 12</fullName>
    </recommendedName>
</protein>